<keyword id="KW-0143">Chaperone</keyword>
<keyword id="KW-0963">Cytoplasm</keyword>
<keyword id="KW-0694">RNA-binding</keyword>
<evidence type="ECO:0000255" key="1">
    <source>
        <dbReference type="HAMAP-Rule" id="MF_00749"/>
    </source>
</evidence>
<evidence type="ECO:0000256" key="2">
    <source>
        <dbReference type="SAM" id="MobiDB-lite"/>
    </source>
</evidence>
<reference key="1">
    <citation type="journal article" date="2011" name="J. Bacteriol.">
        <title>Comparative genomics of 28 Salmonella enterica isolates: evidence for CRISPR-mediated adaptive sublineage evolution.</title>
        <authorList>
            <person name="Fricke W.F."/>
            <person name="Mammel M.K."/>
            <person name="McDermott P.F."/>
            <person name="Tartera C."/>
            <person name="White D.G."/>
            <person name="Leclerc J.E."/>
            <person name="Ravel J."/>
            <person name="Cebula T.A."/>
        </authorList>
    </citation>
    <scope>NUCLEOTIDE SEQUENCE [LARGE SCALE GENOMIC DNA]</scope>
    <source>
        <strain>CT_02021853</strain>
    </source>
</reference>
<organism>
    <name type="scientific">Salmonella dublin (strain CT_02021853)</name>
    <dbReference type="NCBI Taxonomy" id="439851"/>
    <lineage>
        <taxon>Bacteria</taxon>
        <taxon>Pseudomonadati</taxon>
        <taxon>Pseudomonadota</taxon>
        <taxon>Gammaproteobacteria</taxon>
        <taxon>Enterobacterales</taxon>
        <taxon>Enterobacteriaceae</taxon>
        <taxon>Salmonella</taxon>
    </lineage>
</organism>
<name>PROQ_SALDC</name>
<comment type="function">
    <text evidence="1">RNA chaperone with significant RNA binding, RNA strand exchange and RNA duplexing activities. May regulate ProP activity through an RNA-based, post-transcriptional mechanism.</text>
</comment>
<comment type="subcellular location">
    <subcellularLocation>
        <location evidence="1">Cytoplasm</location>
    </subcellularLocation>
</comment>
<comment type="similarity">
    <text evidence="1">Belongs to the ProQ family.</text>
</comment>
<dbReference type="EMBL" id="CP001144">
    <property type="protein sequence ID" value="ACH74582.1"/>
    <property type="molecule type" value="Genomic_DNA"/>
</dbReference>
<dbReference type="RefSeq" id="WP_000431401.1">
    <property type="nucleotide sequence ID" value="NC_011205.1"/>
</dbReference>
<dbReference type="SMR" id="B5FTI8"/>
<dbReference type="KEGG" id="sed:SeD_A1469"/>
<dbReference type="HOGENOM" id="CLU_113254_0_0_6"/>
<dbReference type="Proteomes" id="UP000008322">
    <property type="component" value="Chromosome"/>
</dbReference>
<dbReference type="GO" id="GO:0005829">
    <property type="term" value="C:cytosol"/>
    <property type="evidence" value="ECO:0007669"/>
    <property type="project" value="TreeGrafter"/>
</dbReference>
<dbReference type="GO" id="GO:0033592">
    <property type="term" value="F:RNA strand annealing activity"/>
    <property type="evidence" value="ECO:0007669"/>
    <property type="project" value="UniProtKB-UniRule"/>
</dbReference>
<dbReference type="GO" id="GO:0034057">
    <property type="term" value="F:RNA strand-exchange activity"/>
    <property type="evidence" value="ECO:0007669"/>
    <property type="project" value="UniProtKB-UniRule"/>
</dbReference>
<dbReference type="GO" id="GO:0010608">
    <property type="term" value="P:post-transcriptional regulation of gene expression"/>
    <property type="evidence" value="ECO:0007669"/>
    <property type="project" value="InterPro"/>
</dbReference>
<dbReference type="FunFam" id="1.10.1710.10:FF:000001">
    <property type="entry name" value="RNA chaperone ProQ"/>
    <property type="match status" value="1"/>
</dbReference>
<dbReference type="Gene3D" id="1.10.1710.10">
    <property type="entry name" value="ProQ/FinO domain"/>
    <property type="match status" value="1"/>
</dbReference>
<dbReference type="HAMAP" id="MF_00749">
    <property type="entry name" value="ProQ"/>
    <property type="match status" value="1"/>
</dbReference>
<dbReference type="InterPro" id="IPR023529">
    <property type="entry name" value="ProQ"/>
</dbReference>
<dbReference type="InterPro" id="IPR016103">
    <property type="entry name" value="ProQ/FinO"/>
</dbReference>
<dbReference type="InterPro" id="IPR036442">
    <property type="entry name" value="ProQ/FinO_sf"/>
</dbReference>
<dbReference type="InterPro" id="IPR035236">
    <property type="entry name" value="ProQ_C"/>
</dbReference>
<dbReference type="NCBIfam" id="NF003434">
    <property type="entry name" value="PRK04950.1"/>
    <property type="match status" value="1"/>
</dbReference>
<dbReference type="PANTHER" id="PTHR38106">
    <property type="entry name" value="RNA CHAPERONE PROQ"/>
    <property type="match status" value="1"/>
</dbReference>
<dbReference type="PANTHER" id="PTHR38106:SF1">
    <property type="entry name" value="RNA CHAPERONE PROQ"/>
    <property type="match status" value="1"/>
</dbReference>
<dbReference type="Pfam" id="PF04352">
    <property type="entry name" value="ProQ"/>
    <property type="match status" value="1"/>
</dbReference>
<dbReference type="Pfam" id="PF17516">
    <property type="entry name" value="ProQ_C"/>
    <property type="match status" value="1"/>
</dbReference>
<dbReference type="SMART" id="SM00945">
    <property type="entry name" value="ProQ"/>
    <property type="match status" value="1"/>
</dbReference>
<dbReference type="SUPFAM" id="SSF48657">
    <property type="entry name" value="FinO-like"/>
    <property type="match status" value="1"/>
</dbReference>
<accession>B5FTI8</accession>
<proteinExistence type="inferred from homology"/>
<protein>
    <recommendedName>
        <fullName evidence="1">RNA chaperone ProQ</fullName>
    </recommendedName>
</protein>
<sequence>MENQPKLNSSKEVIAFLAERFPHCFSAEGEARPLKIGIFQDLVERVGGEMNLSKTQLRSALRLYTSSWRYLYGVKPGATRVDLDGNPCGELEEQHVEHARKQLEEAKARVQAQRAEQQAKKREAAAAAGEKEDAPRRERKPRPVARRKEGAERKPRADKPTTKAPRAPREEKHTPVSDISVLTVGQSLKVKAGNNAMDATVLEITKDGVRVQLNSGMSLIVRAEHLVF</sequence>
<gene>
    <name evidence="1" type="primary">proQ</name>
    <name type="ordered locus">SeD_A1469</name>
</gene>
<feature type="chain" id="PRO_1000133302" description="RNA chaperone ProQ">
    <location>
        <begin position="1"/>
        <end position="228"/>
    </location>
</feature>
<feature type="region of interest" description="Disordered" evidence="2">
    <location>
        <begin position="107"/>
        <end position="178"/>
    </location>
</feature>
<feature type="compositionally biased region" description="Basic and acidic residues" evidence="2">
    <location>
        <begin position="117"/>
        <end position="136"/>
    </location>
</feature>
<feature type="compositionally biased region" description="Basic and acidic residues" evidence="2">
    <location>
        <begin position="146"/>
        <end position="175"/>
    </location>
</feature>